<reference key="1">
    <citation type="journal article" date="2009" name="PLoS Biol.">
        <title>Lineage-specific biology revealed by a finished genome assembly of the mouse.</title>
        <authorList>
            <person name="Church D.M."/>
            <person name="Goodstadt L."/>
            <person name="Hillier L.W."/>
            <person name="Zody M.C."/>
            <person name="Goldstein S."/>
            <person name="She X."/>
            <person name="Bult C.J."/>
            <person name="Agarwala R."/>
            <person name="Cherry J.L."/>
            <person name="DiCuccio M."/>
            <person name="Hlavina W."/>
            <person name="Kapustin Y."/>
            <person name="Meric P."/>
            <person name="Maglott D."/>
            <person name="Birtle Z."/>
            <person name="Marques A.C."/>
            <person name="Graves T."/>
            <person name="Zhou S."/>
            <person name="Teague B."/>
            <person name="Potamousis K."/>
            <person name="Churas C."/>
            <person name="Place M."/>
            <person name="Herschleb J."/>
            <person name="Runnheim R."/>
            <person name="Forrest D."/>
            <person name="Amos-Landgraf J."/>
            <person name="Schwartz D.C."/>
            <person name="Cheng Z."/>
            <person name="Lindblad-Toh K."/>
            <person name="Eichler E.E."/>
            <person name="Ponting C.P."/>
        </authorList>
    </citation>
    <scope>NUCLEOTIDE SEQUENCE [LARGE SCALE GENOMIC DNA]</scope>
    <source>
        <strain>C57BL/6J</strain>
    </source>
</reference>
<reference key="2">
    <citation type="journal article" date="2004" name="Genome Res.">
        <title>The status, quality, and expansion of the NIH full-length cDNA project: the Mammalian Gene Collection (MGC).</title>
        <authorList>
            <consortium name="The MGC Project Team"/>
        </authorList>
    </citation>
    <scope>NUCLEOTIDE SEQUENCE [LARGE SCALE MRNA] OF 75-1282</scope>
    <source>
        <strain>C57BL/6J</strain>
        <tissue>Brain</tissue>
    </source>
</reference>
<reference key="3">
    <citation type="journal article" date="2005" name="Mol. Vis.">
        <title>Characterization of the crumbs homolog 2 (CRB2) gene and analysis of its role in retinitis pigmentosa and Leber congenital amaurosis.</title>
        <authorList>
            <person name="van den Hurk J.A.J.M."/>
            <person name="Rashbass P."/>
            <person name="Roepman R."/>
            <person name="Davis J."/>
            <person name="Voesenek K.E.J."/>
            <person name="Arends M.L."/>
            <person name="Zonneveld M.N."/>
            <person name="van Roekel M.H.G."/>
            <person name="Cameron K."/>
            <person name="Rohrschneider K."/>
            <person name="Heckenlively J.R."/>
            <person name="Koenekoop R.K."/>
            <person name="Hoyng C.B."/>
            <person name="Cremers F.P.M."/>
            <person name="den Hollander A.I."/>
        </authorList>
    </citation>
    <scope>TISSUE SPECIFICITY</scope>
</reference>
<reference key="4">
    <citation type="journal article" date="2007" name="Exp. Cell Res.">
        <title>FERM protein EPB41L5 is a novel member of the mammalian CRB-MPP5 polarity complex.</title>
        <authorList>
            <person name="Gosens I."/>
            <person name="Sessa A."/>
            <person name="den Hollander A.I."/>
            <person name="Letteboer S.J.F."/>
            <person name="Belloni V."/>
            <person name="Arends M.L."/>
            <person name="Le Bivic A."/>
            <person name="Cremers F.P.M."/>
            <person name="Broccoli V."/>
            <person name="Roepman R."/>
        </authorList>
    </citation>
    <scope>SUBCELLULAR LOCATION</scope>
    <scope>DEVELOPMENTAL STAGE</scope>
</reference>
<reference key="5">
    <citation type="journal article" date="2011" name="Dev. Dyn.">
        <title>Deficiency in Crumbs homolog 2 (Crb2) affects gastrulation and results in embryonic lethality in mice.</title>
        <authorList>
            <person name="Xiao Z."/>
            <person name="Patrakka J."/>
            <person name="Nukui M."/>
            <person name="Chi L."/>
            <person name="Niu D."/>
            <person name="Betsholtz C."/>
            <person name="Pikkarainen T."/>
            <person name="Pikkarainan T."/>
            <person name="Vainio S."/>
            <person name="Tryggvason K."/>
        </authorList>
    </citation>
    <scope>DEVELOPMENTAL STAGE</scope>
    <scope>DISRUPTION PHENOTYPE</scope>
</reference>
<reference key="6">
    <citation type="journal article" date="2013" name="Hum. Mol. Genet.">
        <title>Loss of CRB2 in the mouse retina mimics human retinitis pigmentosa due to mutations in the CRB1 gene.</title>
        <authorList>
            <person name="Alves C.H."/>
            <person name="Sanz A.S."/>
            <person name="Park B."/>
            <person name="Pellissier L.P."/>
            <person name="Tanimoto N."/>
            <person name="Beck S.C."/>
            <person name="Huber G."/>
            <person name="Murtaza M."/>
            <person name="Richard F."/>
            <person name="Sridevi Gurubaran I."/>
            <person name="Garcia Garrido M."/>
            <person name="Levelt C.N."/>
            <person name="Rashbass P."/>
            <person name="Le Bivic A."/>
            <person name="Seeliger M.W."/>
            <person name="Wijnholds J."/>
        </authorList>
    </citation>
    <scope>DISRUPTION PHENOTYPE</scope>
</reference>
<reference key="7">
    <citation type="journal article" date="2015" name="PLoS Genet.">
        <title>Protein O-glucosyltransferase 1 (POGLUT1) promotes mouse gastrulation through modification of the apical polarity protein CRUMBS2.</title>
        <authorList>
            <person name="Ramkumar N."/>
            <person name="Harvey B.M."/>
            <person name="Lee J.D."/>
            <person name="Alcorn H.L."/>
            <person name="Silva-Gagliardi N.F."/>
            <person name="McGlade C.J."/>
            <person name="Bestor T.H."/>
            <person name="Wijnholds J."/>
            <person name="Haltiwanger R.S."/>
            <person name="Anderson K.V."/>
        </authorList>
    </citation>
    <scope>GLYCOSYLATION AT SER-271</scope>
    <scope>SUBCELLULAR LOCATION</scope>
    <scope>FUNCTION</scope>
</reference>
<reference key="8">
    <citation type="journal article" date="2016" name="Nat. Cell Biol.">
        <title>Crumbs2 promotes cell ingression during the epithelial-to-mesenchymal transition at gastrulation.</title>
        <authorList>
            <person name="Ramkumar N."/>
            <person name="Omelchenko T."/>
            <person name="Silva-Gagliardi N.F."/>
            <person name="McGlade C.J."/>
            <person name="Wijnholds J."/>
            <person name="Anderson K.V."/>
        </authorList>
    </citation>
    <scope>FUNCTION</scope>
    <scope>SUBCELLULAR LOCATION</scope>
    <scope>DISRUPTION PHENOTYPE</scope>
</reference>
<reference key="9">
    <citation type="journal article" date="2016" name="Neurosci. Res.">
        <title>Crumbs 2 prevents cortical abnormalities in mouse dorsal telencephalon.</title>
        <authorList>
            <person name="Dudok J.J."/>
            <person name="Murtaza M."/>
            <person name="Henrique Alves C."/>
            <person name="Rashbass P."/>
            <person name="Wijnholds J."/>
        </authorList>
    </citation>
    <scope>FUNCTION</scope>
    <scope>DISRUPTION PHENOTYPE</scope>
</reference>
<comment type="function">
    <text evidence="9 10 11">Apical polarity protein that plays a central role during the epithelial-to-mesenchymal transition (EMT) at gastrulation, when newly specified mesodermal cells move inside the embryo (PubMed:26496195, PubMed:27870829). Acts by promoting cell ingression, the process by which cells leave the epithelial epiblast and move inside the embryo to form a new tissue layer (PubMed:27870829). The anisotropic distribution of CRB2 and MYH10/myosin-IIB at cell edges define which cells will ingress: cells with high apical CRB2 are probably extruded from the epiblast by neighboring cells with high levels of apical MYH10/myosin-IIB (PubMed:27870829). Also required for maintenance of the apical polarity complex during development of the cortex.</text>
</comment>
<comment type="subunit">
    <text evidence="1">Interacts (via intracellular domain) with EPB41L5.</text>
</comment>
<comment type="subcellular location">
    <subcellularLocation>
        <location evidence="6 9 11">Apical cell membrane</location>
        <topology evidence="2">Single-pass type I membrane protein</topology>
    </subcellularLocation>
    <text evidence="9 11">O-glucosylation is required for localization at the apical plasma membrane (PubMed:26496195). Distributed in a complex anisotropic pattern on apical cell edges: the level of CRB2 on a cell edge is inversely correlated with the level of MYH10/myosin-IIB (PubMed:27870829).</text>
</comment>
<comment type="tissue specificity">
    <text evidence="5">In the adult eye, strongly expressed in the outer nuclear layer, containing the cell bodies of the photoreceptor cells, and in the inner nuclear layer, containing the cell bodies of the horizontal, bipolar, amacrine, and Mueller glial cells (PubMed:15851977). Also expressed in some cells in the ganglion cell layer (or may be displaced amacrine cells rather than ganglion cells) (PubMed:15851977).</text>
</comment>
<comment type="developmental stage">
    <text evidence="6 7">Expressed in early embryonic cells, more specifically in embryonic regions undergoing dramatic rearrangement, such as the developing neuroepithelium which proceeds with neural tube closure, the anterior splitting lateral plate mesoderm that wraps the pericardial cavity and the differentiating somite epithelium (PubMed:22072575). Widely expressed throughout the epiblast and the lateral plate mesoderm at 7 dpc. At 7.5 dpc-7.75 dpc, continues to be expressed in these regions, and expression is also found on the apical side of the embryonic endoderm, and extraembryonic amnion and allantois (PubMed:22072575). At 8-8.5 dpc, expression is also detected in the heart tube, foregut and the apical side of the somite epithelium (PubMed:22072575). Stronger expression is detected on the apical sides of the splitting lateral plate mesoderm, and the apical side of the neural ectoderm at trunk region (PubMed:22072575). Not expressed in the notochord plate or the extra-embryonic endoderm (PubMed:22072575). Expressed in the developing spinal cord, eye, and forebrain at 10.5 dpc (PubMed:17920587). Expressed in the ventricular layers of the developing neural tube along the entire cranial-caudal length, including the anterior forebrain and the posterior spinal cord at 11.5 dpc (PubMed:17920587). Expressed in apical epithelial kidney cells at 15.5 dpc (PubMed:17920587).</text>
</comment>
<comment type="PTM">
    <text evidence="9">O-glucosylated by POGLUT1 at Ser-271; consists of an O-glucose trisaccharide, in which the O-glucose is elongated by the addition of two xylose residues (PubMed:26496195). O-glucosylation is required for localization at the plasma membrane (PubMed:26496195).</text>
</comment>
<comment type="disruption phenotype">
    <text evidence="7 8 10 11">Embryonic lethality due impaired gastrulation (PubMed:22072575, PubMed:27870829). Mesoderm formation is disrupted, and cells do not ingress (PubMed:27870829). Instead, a single layer forms, and the embryo fails to properly establish its body plan, leading to embryonic arrest (PubMed:27870829). Conditional deletion in the developing retina leads to progressive disorganization during late retinal development: retina show progressive thinning of the photoreceptor layer and sites of cellular mislocalization (PubMed:23001562). Conditional deletion in the dorsal telencephalon leads to defects in the maintenance of the apical complex (PubMed:26802325).</text>
</comment>
<comment type="similarity">
    <text evidence="13">Belongs to the Crumbs protein family.</text>
</comment>
<dbReference type="EMBL" id="AL805959">
    <property type="status" value="NOT_ANNOTATED_CDS"/>
    <property type="molecule type" value="Genomic_DNA"/>
</dbReference>
<dbReference type="EMBL" id="BC043114">
    <property type="protein sequence ID" value="AAH43114.1"/>
    <property type="molecule type" value="mRNA"/>
</dbReference>
<dbReference type="EMBL" id="BC062128">
    <property type="protein sequence ID" value="AAH62128.1"/>
    <property type="molecule type" value="mRNA"/>
</dbReference>
<dbReference type="CCDS" id="CCDS50580.1"/>
<dbReference type="RefSeq" id="NP_001157038.1">
    <property type="nucleotide sequence ID" value="NM_001163566.2"/>
</dbReference>
<dbReference type="SMR" id="Q80YA8"/>
<dbReference type="FunCoup" id="Q80YA8">
    <property type="interactions" value="155"/>
</dbReference>
<dbReference type="STRING" id="10090.ENSMUSP00000058007"/>
<dbReference type="GlyCosmos" id="Q80YA8">
    <property type="glycosylation" value="13 sites, No reported glycans"/>
</dbReference>
<dbReference type="GlyGen" id="Q80YA8">
    <property type="glycosylation" value="14 sites, 2 N-linked glycans (2 sites)"/>
</dbReference>
<dbReference type="iPTMnet" id="Q80YA8"/>
<dbReference type="PhosphoSitePlus" id="Q80YA8"/>
<dbReference type="PaxDb" id="10090-ENSMUSP00000058007"/>
<dbReference type="PeptideAtlas" id="Q80YA8"/>
<dbReference type="ProteomicsDB" id="285369"/>
<dbReference type="Antibodypedia" id="48144">
    <property type="antibodies" value="121 antibodies from 21 providers"/>
</dbReference>
<dbReference type="Ensembl" id="ENSMUST00000050372.10">
    <property type="protein sequence ID" value="ENSMUSP00000058007.8"/>
    <property type="gene ID" value="ENSMUSG00000035403.11"/>
</dbReference>
<dbReference type="GeneID" id="241324"/>
<dbReference type="KEGG" id="mmu:241324"/>
<dbReference type="UCSC" id="uc008jnf.2">
    <property type="organism name" value="mouse"/>
</dbReference>
<dbReference type="AGR" id="MGI:2679260"/>
<dbReference type="CTD" id="286204"/>
<dbReference type="MGI" id="MGI:2679260">
    <property type="gene designation" value="Crb2"/>
</dbReference>
<dbReference type="VEuPathDB" id="HostDB:ENSMUSG00000035403"/>
<dbReference type="eggNOG" id="KOG1217">
    <property type="taxonomic scope" value="Eukaryota"/>
</dbReference>
<dbReference type="GeneTree" id="ENSGT00950000183101"/>
<dbReference type="HOGENOM" id="CLU_000827_2_0_1"/>
<dbReference type="InParanoid" id="Q80YA8"/>
<dbReference type="OMA" id="CLCWPGF"/>
<dbReference type="OrthoDB" id="283575at2759"/>
<dbReference type="PhylomeDB" id="Q80YA8"/>
<dbReference type="TreeFam" id="TF316224"/>
<dbReference type="BioGRID-ORCS" id="241324">
    <property type="hits" value="5 hits in 80 CRISPR screens"/>
</dbReference>
<dbReference type="PRO" id="PR:Q80YA8"/>
<dbReference type="Proteomes" id="UP000000589">
    <property type="component" value="Chromosome 2"/>
</dbReference>
<dbReference type="RNAct" id="Q80YA8">
    <property type="molecule type" value="protein"/>
</dbReference>
<dbReference type="Bgee" id="ENSMUSG00000035403">
    <property type="expression patterns" value="Expressed in retinal neural layer and 46 other cell types or tissues"/>
</dbReference>
<dbReference type="ExpressionAtlas" id="Q80YA8">
    <property type="expression patterns" value="baseline and differential"/>
</dbReference>
<dbReference type="GO" id="GO:0045177">
    <property type="term" value="C:apical part of cell"/>
    <property type="evidence" value="ECO:0000314"/>
    <property type="project" value="MGI"/>
</dbReference>
<dbReference type="GO" id="GO:0016324">
    <property type="term" value="C:apical plasma membrane"/>
    <property type="evidence" value="ECO:0000314"/>
    <property type="project" value="UniProtKB"/>
</dbReference>
<dbReference type="GO" id="GO:0016327">
    <property type="term" value="C:apicolateral plasma membrane"/>
    <property type="evidence" value="ECO:0000314"/>
    <property type="project" value="UniProtKB"/>
</dbReference>
<dbReference type="GO" id="GO:0030054">
    <property type="term" value="C:cell junction"/>
    <property type="evidence" value="ECO:0000314"/>
    <property type="project" value="UniProtKB"/>
</dbReference>
<dbReference type="GO" id="GO:0005737">
    <property type="term" value="C:cytoplasm"/>
    <property type="evidence" value="ECO:0000314"/>
    <property type="project" value="UniProtKB"/>
</dbReference>
<dbReference type="GO" id="GO:0035003">
    <property type="term" value="C:subapical complex"/>
    <property type="evidence" value="ECO:0000314"/>
    <property type="project" value="MGI"/>
</dbReference>
<dbReference type="GO" id="GO:0019828">
    <property type="term" value="F:aspartic-type endopeptidase inhibitor activity"/>
    <property type="evidence" value="ECO:0007669"/>
    <property type="project" value="Ensembl"/>
</dbReference>
<dbReference type="GO" id="GO:0005509">
    <property type="term" value="F:calcium ion binding"/>
    <property type="evidence" value="ECO:0007669"/>
    <property type="project" value="InterPro"/>
</dbReference>
<dbReference type="GO" id="GO:0044877">
    <property type="term" value="F:protein-containing complex binding"/>
    <property type="evidence" value="ECO:0007669"/>
    <property type="project" value="Ensembl"/>
</dbReference>
<dbReference type="GO" id="GO:0072359">
    <property type="term" value="P:circulatory system development"/>
    <property type="evidence" value="ECO:0000315"/>
    <property type="project" value="UniProtKB"/>
</dbReference>
<dbReference type="GO" id="GO:0030010">
    <property type="term" value="P:establishment of cell polarity"/>
    <property type="evidence" value="ECO:0000315"/>
    <property type="project" value="UniProtKB"/>
</dbReference>
<dbReference type="GO" id="GO:0055111">
    <property type="term" value="P:ingression involved in gastrulation with mouth forming second"/>
    <property type="evidence" value="ECO:0000315"/>
    <property type="project" value="UniProtKB"/>
</dbReference>
<dbReference type="GO" id="GO:0045199">
    <property type="term" value="P:maintenance of epithelial cell apical/basal polarity"/>
    <property type="evidence" value="ECO:0000315"/>
    <property type="project" value="UniProtKB"/>
</dbReference>
<dbReference type="GO" id="GO:0001707">
    <property type="term" value="P:mesoderm formation"/>
    <property type="evidence" value="ECO:0000315"/>
    <property type="project" value="UniProtKB"/>
</dbReference>
<dbReference type="GO" id="GO:0014028">
    <property type="term" value="P:notochord formation"/>
    <property type="evidence" value="ECO:0000315"/>
    <property type="project" value="UniProtKB"/>
</dbReference>
<dbReference type="GO" id="GO:0045494">
    <property type="term" value="P:photoreceptor cell maintenance"/>
    <property type="evidence" value="ECO:0000315"/>
    <property type="project" value="UniProtKB"/>
</dbReference>
<dbReference type="GO" id="GO:0030513">
    <property type="term" value="P:positive regulation of BMP signaling pathway"/>
    <property type="evidence" value="ECO:0000315"/>
    <property type="project" value="UniProtKB"/>
</dbReference>
<dbReference type="GO" id="GO:0010718">
    <property type="term" value="P:positive regulation of epithelial to mesenchymal transition"/>
    <property type="evidence" value="ECO:0000315"/>
    <property type="project" value="UniProtKB"/>
</dbReference>
<dbReference type="GO" id="GO:0010470">
    <property type="term" value="P:regulation of gastrulation"/>
    <property type="evidence" value="ECO:0000315"/>
    <property type="project" value="UniProtKB"/>
</dbReference>
<dbReference type="GO" id="GO:0001895">
    <property type="term" value="P:retina homeostasis"/>
    <property type="evidence" value="ECO:0000315"/>
    <property type="project" value="UniProtKB"/>
</dbReference>
<dbReference type="GO" id="GO:0046549">
    <property type="term" value="P:retinal cone cell development"/>
    <property type="evidence" value="ECO:0000315"/>
    <property type="project" value="UniProtKB"/>
</dbReference>
<dbReference type="GO" id="GO:0001756">
    <property type="term" value="P:somitogenesis"/>
    <property type="evidence" value="ECO:0000315"/>
    <property type="project" value="UniProtKB"/>
</dbReference>
<dbReference type="CDD" id="cd00054">
    <property type="entry name" value="EGF_CA"/>
    <property type="match status" value="11"/>
</dbReference>
<dbReference type="CDD" id="cd00110">
    <property type="entry name" value="LamG"/>
    <property type="match status" value="3"/>
</dbReference>
<dbReference type="FunFam" id="2.10.25.10:FF:000208">
    <property type="entry name" value="Crumbs 2, cell polarity complex component"/>
    <property type="match status" value="1"/>
</dbReference>
<dbReference type="FunFam" id="2.10.25.10:FF:000501">
    <property type="entry name" value="Crumbs 2, cell polarity complex component"/>
    <property type="match status" value="1"/>
</dbReference>
<dbReference type="FunFam" id="2.10.25.10:FF:000530">
    <property type="entry name" value="Crumbs 2, cell polarity complex component"/>
    <property type="match status" value="1"/>
</dbReference>
<dbReference type="FunFam" id="2.10.25.10:FF:000559">
    <property type="entry name" value="Crumbs 2, cell polarity complex component"/>
    <property type="match status" value="1"/>
</dbReference>
<dbReference type="FunFam" id="2.10.25.10:FF:000039">
    <property type="entry name" value="Crumbs cell polarity complex component 1"/>
    <property type="match status" value="1"/>
</dbReference>
<dbReference type="FunFam" id="2.10.25.10:FF:000142">
    <property type="entry name" value="Crumbs cell polarity complex component 2"/>
    <property type="match status" value="1"/>
</dbReference>
<dbReference type="FunFam" id="2.10.25.10:FF:000339">
    <property type="entry name" value="Crumbs cell polarity complex component 2"/>
    <property type="match status" value="1"/>
</dbReference>
<dbReference type="FunFam" id="2.10.25.10:FF:000411">
    <property type="entry name" value="Crumbs cell polarity complex component 2"/>
    <property type="match status" value="1"/>
</dbReference>
<dbReference type="FunFam" id="2.10.25.10:FF:001259">
    <property type="entry name" value="Crumbs cell polarity complex component 2"/>
    <property type="match status" value="1"/>
</dbReference>
<dbReference type="FunFam" id="2.60.120.200:FF:000194">
    <property type="entry name" value="Crumbs cell polarity complex component 2"/>
    <property type="match status" value="1"/>
</dbReference>
<dbReference type="FunFam" id="2.60.120.200:FF:000204">
    <property type="entry name" value="Crumbs cell polarity complex component 2"/>
    <property type="match status" value="1"/>
</dbReference>
<dbReference type="FunFam" id="2.10.25.10:FF:000109">
    <property type="entry name" value="Notch homolog 4, [Drosophila]"/>
    <property type="match status" value="1"/>
</dbReference>
<dbReference type="FunFam" id="2.10.25.10:FF:000122">
    <property type="entry name" value="Protein crumbs homolog 2"/>
    <property type="match status" value="1"/>
</dbReference>
<dbReference type="Gene3D" id="2.60.120.200">
    <property type="match status" value="3"/>
</dbReference>
<dbReference type="Gene3D" id="2.10.25.10">
    <property type="entry name" value="Laminin"/>
    <property type="match status" value="13"/>
</dbReference>
<dbReference type="InterPro" id="IPR013320">
    <property type="entry name" value="ConA-like_dom_sf"/>
</dbReference>
<dbReference type="InterPro" id="IPR001881">
    <property type="entry name" value="EGF-like_Ca-bd_dom"/>
</dbReference>
<dbReference type="InterPro" id="IPR013032">
    <property type="entry name" value="EGF-like_CS"/>
</dbReference>
<dbReference type="InterPro" id="IPR000742">
    <property type="entry name" value="EGF-like_dom"/>
</dbReference>
<dbReference type="InterPro" id="IPR000152">
    <property type="entry name" value="EGF-type_Asp/Asn_hydroxyl_site"/>
</dbReference>
<dbReference type="InterPro" id="IPR018097">
    <property type="entry name" value="EGF_Ca-bd_CS"/>
</dbReference>
<dbReference type="InterPro" id="IPR009030">
    <property type="entry name" value="Growth_fac_rcpt_cys_sf"/>
</dbReference>
<dbReference type="InterPro" id="IPR001791">
    <property type="entry name" value="Laminin_G"/>
</dbReference>
<dbReference type="InterPro" id="IPR051022">
    <property type="entry name" value="Notch_Cell-Fate_Det"/>
</dbReference>
<dbReference type="PANTHER" id="PTHR24049">
    <property type="entry name" value="CRUMBS FAMILY MEMBER"/>
    <property type="match status" value="1"/>
</dbReference>
<dbReference type="Pfam" id="PF00008">
    <property type="entry name" value="EGF"/>
    <property type="match status" value="9"/>
</dbReference>
<dbReference type="Pfam" id="PF12661">
    <property type="entry name" value="hEGF"/>
    <property type="match status" value="2"/>
</dbReference>
<dbReference type="Pfam" id="PF02210">
    <property type="entry name" value="Laminin_G_2"/>
    <property type="match status" value="1"/>
</dbReference>
<dbReference type="PRINTS" id="PR00010">
    <property type="entry name" value="EGFBLOOD"/>
</dbReference>
<dbReference type="SMART" id="SM00181">
    <property type="entry name" value="EGF"/>
    <property type="match status" value="15"/>
</dbReference>
<dbReference type="SMART" id="SM00179">
    <property type="entry name" value="EGF_CA"/>
    <property type="match status" value="13"/>
</dbReference>
<dbReference type="SMART" id="SM00282">
    <property type="entry name" value="LamG"/>
    <property type="match status" value="3"/>
</dbReference>
<dbReference type="SUPFAM" id="SSF49899">
    <property type="entry name" value="Concanavalin A-like lectins/glucanases"/>
    <property type="match status" value="3"/>
</dbReference>
<dbReference type="SUPFAM" id="SSF57196">
    <property type="entry name" value="EGF/Laminin"/>
    <property type="match status" value="8"/>
</dbReference>
<dbReference type="SUPFAM" id="SSF57184">
    <property type="entry name" value="Growth factor receptor domain"/>
    <property type="match status" value="1"/>
</dbReference>
<dbReference type="PROSITE" id="PS00010">
    <property type="entry name" value="ASX_HYDROXYL"/>
    <property type="match status" value="8"/>
</dbReference>
<dbReference type="PROSITE" id="PS00022">
    <property type="entry name" value="EGF_1"/>
    <property type="match status" value="14"/>
</dbReference>
<dbReference type="PROSITE" id="PS01186">
    <property type="entry name" value="EGF_2"/>
    <property type="match status" value="9"/>
</dbReference>
<dbReference type="PROSITE" id="PS50026">
    <property type="entry name" value="EGF_3"/>
    <property type="match status" value="15"/>
</dbReference>
<dbReference type="PROSITE" id="PS01187">
    <property type="entry name" value="EGF_CA"/>
    <property type="match status" value="5"/>
</dbReference>
<dbReference type="PROSITE" id="PS50025">
    <property type="entry name" value="LAM_G_DOMAIN"/>
    <property type="match status" value="2"/>
</dbReference>
<organism>
    <name type="scientific">Mus musculus</name>
    <name type="common">Mouse</name>
    <dbReference type="NCBI Taxonomy" id="10090"/>
    <lineage>
        <taxon>Eukaryota</taxon>
        <taxon>Metazoa</taxon>
        <taxon>Chordata</taxon>
        <taxon>Craniata</taxon>
        <taxon>Vertebrata</taxon>
        <taxon>Euteleostomi</taxon>
        <taxon>Mammalia</taxon>
        <taxon>Eutheria</taxon>
        <taxon>Euarchontoglires</taxon>
        <taxon>Glires</taxon>
        <taxon>Rodentia</taxon>
        <taxon>Myomorpha</taxon>
        <taxon>Muroidea</taxon>
        <taxon>Muridae</taxon>
        <taxon>Murinae</taxon>
        <taxon>Mus</taxon>
        <taxon>Mus</taxon>
    </lineage>
</organism>
<protein>
    <recommendedName>
        <fullName evidence="13">Protein crumbs homolog 2</fullName>
        <shortName evidence="12">crumbs2</shortName>
    </recommendedName>
    <alternativeName>
        <fullName>Crumbs-like protein 2</fullName>
    </alternativeName>
</protein>
<sequence length="1282" mass="134760">MALVGPRIWGPRRDIYPLLLLLLLLLLLLLPWVPAGLVPPETPSVCASDPCAPGTKCQATESGGYTCEPSELGGCATQPCHHGALCVPQGPDPNSFRCYCVPGFQGPHCELDIDECASRPCQHGGTCQNLADHYECHCPLGYAGVTCEAEVDECSSAPCLHGGSCLDGVGSYRCVCAPGYAGANCQLDVDECQSQPCAHGGVCHDLVNGFRCDCADTGYEGARCEQEVLECASAPCAHNASCLDGFRSFRCLCWPGFSGERCEVDEDECASGPCQNGGQCLQRSDPTLYGGVQAIFPGAFSFSHAAGFLCSCPLGFAGNDCSMDVDECASGPCLNGGSCQDLPNGFQCYCQDGYTGLTCQEDMDECQSEPCLHGGTCSDTVAGYICQCPEAWGGHDCSVQLTGCQGHTCPLAATCIPTFKSGLHGYFCRCPPGTYGPFCGQNTTFSVVSGSSVWGLVPAAASLGLALRFRTTLLAGTLATLKDTRDSLELVLVGAVLQATLSRHGTAVLILTLPDLALNDGHWHQVEVTLHLGTLELRLWHEGCPGQLCVASGPVATGPTASVASGPPGSYSIYLGGGVFAGCFQDVRVEGHLLLPEELKGTVLLGCERREPCQPLPCAHGGACVDLWTHFRCDCPRPYRGATCTDEVPAATFGLGGATSSASFLLHQLGPNLTVSFFLRTREPAGLLLQFANDSVASLTVFLSEGQIRAEGLGHPAVVLPGRWDDGLPHLVMLSFGPDQLQDLGQRLYVGGRFYPDDTQLWGGPFRGCLQDLQLNSIHLPFFSSPMENSSWPSELEAGQSSNLTQGCVSEDTCNPNPCFNGGTCHVTWNDFYCTCSENFTGPTCAQQRWCPRQPCLPPATCEEVPDGFVCVAEATFREGPPAVFTGHNVSSSLSGLTLAFRTRDSEAGLLRAVSAAGAHSNIWLAVRNGSLAGDVAGSVLPAPGPRVADGAWHRVRLAREFPQAAASRWLLWLDGAATPVALHGLGGDLGFLQGPGAVPLLLAENFTGCLGRVALGDFPLPLAPPRSGTVSGAREHFVAWPGSPAVSLGCRGGPVCSPSPCLHGGACRDLFDAFACSCGPAWEGPRCEIRADPCRSTPCVRGQCHARPDGRFECRCPPGFSGPRCRLPVLPQGCNLNSTCKDGAPCEGGPLGTNCSCQEGLAGLRCQSLDKPCEASPCLNGGTCRVASGIFECTCSAGFSGQFCEVVKTLPLPLPFPLLEVAVPAACACLLLLLLGLLSGILAARKRRQSEGTYSPSQQEVAGARLEMDSVLKVPPEERLI</sequence>
<gene>
    <name evidence="15" type="primary">Crb2</name>
</gene>
<evidence type="ECO:0000250" key="1">
    <source>
        <dbReference type="UniProtKB" id="Q5IJ48"/>
    </source>
</evidence>
<evidence type="ECO:0000255" key="2"/>
<evidence type="ECO:0000255" key="3">
    <source>
        <dbReference type="PROSITE-ProRule" id="PRU00076"/>
    </source>
</evidence>
<evidence type="ECO:0000255" key="4">
    <source>
        <dbReference type="PROSITE-ProRule" id="PRU00122"/>
    </source>
</evidence>
<evidence type="ECO:0000269" key="5">
    <source>
    </source>
</evidence>
<evidence type="ECO:0000269" key="6">
    <source>
    </source>
</evidence>
<evidence type="ECO:0000269" key="7">
    <source>
    </source>
</evidence>
<evidence type="ECO:0000269" key="8">
    <source>
    </source>
</evidence>
<evidence type="ECO:0000269" key="9">
    <source>
    </source>
</evidence>
<evidence type="ECO:0000269" key="10">
    <source>
    </source>
</evidence>
<evidence type="ECO:0000269" key="11">
    <source>
    </source>
</evidence>
<evidence type="ECO:0000303" key="12">
    <source>
    </source>
</evidence>
<evidence type="ECO:0000305" key="13"/>
<evidence type="ECO:0000305" key="14">
    <source>
    </source>
</evidence>
<evidence type="ECO:0000312" key="15">
    <source>
        <dbReference type="MGI" id="MGI:2679260"/>
    </source>
</evidence>
<keyword id="KW-0106">Calcium</keyword>
<keyword id="KW-1003">Cell membrane</keyword>
<keyword id="KW-0217">Developmental protein</keyword>
<keyword id="KW-1015">Disulfide bond</keyword>
<keyword id="KW-0245">EGF-like domain</keyword>
<keyword id="KW-0306">Gastrulation</keyword>
<keyword id="KW-0325">Glycoprotein</keyword>
<keyword id="KW-0472">Membrane</keyword>
<keyword id="KW-1185">Reference proteome</keyword>
<keyword id="KW-0677">Repeat</keyword>
<keyword id="KW-0732">Signal</keyword>
<keyword id="KW-0812">Transmembrane</keyword>
<keyword id="KW-1133">Transmembrane helix</keyword>
<feature type="signal peptide" evidence="2">
    <location>
        <begin position="1"/>
        <end position="35"/>
    </location>
</feature>
<feature type="chain" id="PRO_0000055626" description="Protein crumbs homolog 2" evidence="2">
    <location>
        <begin position="36"/>
        <end position="1282"/>
    </location>
</feature>
<feature type="topological domain" description="Extracellular" evidence="13">
    <location>
        <begin position="36"/>
        <end position="1221"/>
    </location>
</feature>
<feature type="transmembrane region" description="Helical" evidence="2">
    <location>
        <begin position="1222"/>
        <end position="1242"/>
    </location>
</feature>
<feature type="topological domain" description="Cytoplasmic" evidence="13">
    <location>
        <begin position="1243"/>
        <end position="1282"/>
    </location>
</feature>
<feature type="domain" description="EGF-like 1" evidence="3">
    <location>
        <begin position="71"/>
        <end position="110"/>
    </location>
</feature>
<feature type="domain" description="EGF-like 2; calcium-binding" evidence="3">
    <location>
        <begin position="112"/>
        <end position="148"/>
    </location>
</feature>
<feature type="domain" description="EGF-like 3; calcium-binding" evidence="3">
    <location>
        <begin position="150"/>
        <end position="186"/>
    </location>
</feature>
<feature type="domain" description="EGF-like 4; calcium-binding" evidence="3">
    <location>
        <begin position="188"/>
        <end position="225"/>
    </location>
</feature>
<feature type="domain" description="EGF-like 5" evidence="3">
    <location>
        <begin position="227"/>
        <end position="263"/>
    </location>
</feature>
<feature type="domain" description="EGF-like 6" evidence="3">
    <location>
        <begin position="265"/>
        <end position="322"/>
    </location>
</feature>
<feature type="domain" description="EGF-like 7; calcium-binding" evidence="3">
    <location>
        <begin position="324"/>
        <end position="360"/>
    </location>
</feature>
<feature type="domain" description="EGF-like 8; calcium-binding" evidence="3">
    <location>
        <begin position="362"/>
        <end position="398"/>
    </location>
</feature>
<feature type="domain" description="EGF-like 9" evidence="3">
    <location>
        <begin position="400"/>
        <end position="440"/>
    </location>
</feature>
<feature type="domain" description="Laminin G-like 1" evidence="4">
    <location>
        <begin position="444"/>
        <end position="607"/>
    </location>
</feature>
<feature type="domain" description="EGF-like 10" evidence="3">
    <location>
        <begin position="609"/>
        <end position="645"/>
    </location>
</feature>
<feature type="domain" description="Laminin G-like 2" evidence="4">
    <location>
        <begin position="649"/>
        <end position="808"/>
    </location>
</feature>
<feature type="domain" description="EGF-like 11" evidence="3">
    <location>
        <begin position="810"/>
        <end position="846"/>
    </location>
</feature>
<feature type="domain" description="Laminin G-like 3" evidence="4">
    <location>
        <begin position="872"/>
        <end position="1051"/>
    </location>
</feature>
<feature type="domain" description="EGF-like 12" evidence="3">
    <location>
        <begin position="1053"/>
        <end position="1089"/>
    </location>
</feature>
<feature type="domain" description="EGF-like 13" evidence="3">
    <location>
        <begin position="1091"/>
        <end position="1127"/>
    </location>
</feature>
<feature type="domain" description="EGF-like 14" evidence="3">
    <location>
        <begin position="1131"/>
        <end position="1168"/>
    </location>
</feature>
<feature type="domain" description="EGF-like 15" evidence="3">
    <location>
        <begin position="1170"/>
        <end position="1206"/>
    </location>
</feature>
<feature type="region of interest" description="Interaction with EPB41L5" evidence="1">
    <location>
        <begin position="1246"/>
        <end position="1282"/>
    </location>
</feature>
<feature type="glycosylation site" description="N-linked (GlcNAc...) asparagine" evidence="2">
    <location>
        <position position="239"/>
    </location>
</feature>
<feature type="glycosylation site" description="O-linked (Glc...) serine" evidence="14">
    <location>
        <position position="271"/>
    </location>
</feature>
<feature type="glycosylation site" description="N-linked (GlcNAc...) asparagine" evidence="2">
    <location>
        <position position="442"/>
    </location>
</feature>
<feature type="glycosylation site" description="N-linked (GlcNAc...) asparagine" evidence="2">
    <location>
        <position position="672"/>
    </location>
</feature>
<feature type="glycosylation site" description="N-linked (GlcNAc...) asparagine" evidence="2">
    <location>
        <position position="693"/>
    </location>
</feature>
<feature type="glycosylation site" description="N-linked (GlcNAc...) asparagine" evidence="2">
    <location>
        <position position="789"/>
    </location>
</feature>
<feature type="glycosylation site" description="N-linked (GlcNAc...) asparagine" evidence="2">
    <location>
        <position position="803"/>
    </location>
</feature>
<feature type="glycosylation site" description="N-linked (GlcNAc...) asparagine" evidence="2">
    <location>
        <position position="839"/>
    </location>
</feature>
<feature type="glycosylation site" description="N-linked (GlcNAc...) asparagine" evidence="2">
    <location>
        <position position="889"/>
    </location>
</feature>
<feature type="glycosylation site" description="N-linked (GlcNAc...) asparagine" evidence="2">
    <location>
        <position position="929"/>
    </location>
</feature>
<feature type="glycosylation site" description="N-linked (GlcNAc...) asparagine" evidence="2">
    <location>
        <position position="1006"/>
    </location>
</feature>
<feature type="glycosylation site" description="N-linked (GlcNAc...) asparagine" evidence="2">
    <location>
        <position position="1138"/>
    </location>
</feature>
<feature type="glycosylation site" description="N-linked (GlcNAc...) asparagine" evidence="2">
    <location>
        <position position="1155"/>
    </location>
</feature>
<feature type="disulfide bond" evidence="3">
    <location>
        <begin position="75"/>
        <end position="86"/>
    </location>
</feature>
<feature type="disulfide bond" evidence="3">
    <location>
        <begin position="80"/>
        <end position="98"/>
    </location>
</feature>
<feature type="disulfide bond" evidence="3">
    <location>
        <begin position="100"/>
        <end position="109"/>
    </location>
</feature>
<feature type="disulfide bond" evidence="3">
    <location>
        <begin position="116"/>
        <end position="127"/>
    </location>
</feature>
<feature type="disulfide bond" evidence="3">
    <location>
        <begin position="121"/>
        <end position="136"/>
    </location>
</feature>
<feature type="disulfide bond" evidence="3">
    <location>
        <begin position="138"/>
        <end position="147"/>
    </location>
</feature>
<feature type="disulfide bond" evidence="3">
    <location>
        <begin position="154"/>
        <end position="165"/>
    </location>
</feature>
<feature type="disulfide bond" evidence="3">
    <location>
        <begin position="159"/>
        <end position="174"/>
    </location>
</feature>
<feature type="disulfide bond" evidence="3">
    <location>
        <begin position="176"/>
        <end position="185"/>
    </location>
</feature>
<feature type="disulfide bond" evidence="3">
    <location>
        <begin position="192"/>
        <end position="203"/>
    </location>
</feature>
<feature type="disulfide bond" evidence="3">
    <location>
        <begin position="197"/>
        <end position="212"/>
    </location>
</feature>
<feature type="disulfide bond" evidence="3">
    <location>
        <begin position="214"/>
        <end position="224"/>
    </location>
</feature>
<feature type="disulfide bond" evidence="3">
    <location>
        <begin position="231"/>
        <end position="242"/>
    </location>
</feature>
<feature type="disulfide bond" evidence="3">
    <location>
        <begin position="236"/>
        <end position="251"/>
    </location>
</feature>
<feature type="disulfide bond" evidence="3">
    <location>
        <begin position="253"/>
        <end position="262"/>
    </location>
</feature>
<feature type="disulfide bond" evidence="3">
    <location>
        <begin position="269"/>
        <end position="280"/>
    </location>
</feature>
<feature type="disulfide bond" evidence="3">
    <location>
        <begin position="274"/>
        <end position="310"/>
    </location>
</feature>
<feature type="disulfide bond" evidence="3">
    <location>
        <begin position="312"/>
        <end position="321"/>
    </location>
</feature>
<feature type="disulfide bond" evidence="3">
    <location>
        <begin position="328"/>
        <end position="339"/>
    </location>
</feature>
<feature type="disulfide bond" evidence="3">
    <location>
        <begin position="333"/>
        <end position="348"/>
    </location>
</feature>
<feature type="disulfide bond" evidence="3">
    <location>
        <begin position="350"/>
        <end position="359"/>
    </location>
</feature>
<feature type="disulfide bond" evidence="3">
    <location>
        <begin position="366"/>
        <end position="377"/>
    </location>
</feature>
<feature type="disulfide bond" evidence="3">
    <location>
        <begin position="371"/>
        <end position="386"/>
    </location>
</feature>
<feature type="disulfide bond" evidence="3">
    <location>
        <begin position="388"/>
        <end position="397"/>
    </location>
</feature>
<feature type="disulfide bond" evidence="3">
    <location>
        <begin position="404"/>
        <end position="415"/>
    </location>
</feature>
<feature type="disulfide bond" evidence="3">
    <location>
        <begin position="409"/>
        <end position="428"/>
    </location>
</feature>
<feature type="disulfide bond" evidence="3">
    <location>
        <begin position="430"/>
        <end position="439"/>
    </location>
</feature>
<feature type="disulfide bond" evidence="4">
    <location>
        <begin position="583"/>
        <end position="607"/>
    </location>
</feature>
<feature type="disulfide bond" evidence="3">
    <location>
        <begin position="613"/>
        <end position="624"/>
    </location>
</feature>
<feature type="disulfide bond" evidence="3">
    <location>
        <begin position="618"/>
        <end position="633"/>
    </location>
</feature>
<feature type="disulfide bond" evidence="3">
    <location>
        <begin position="635"/>
        <end position="644"/>
    </location>
</feature>
<feature type="disulfide bond" evidence="4">
    <location>
        <begin position="769"/>
        <end position="808"/>
    </location>
</feature>
<feature type="disulfide bond" evidence="3">
    <location>
        <begin position="814"/>
        <end position="825"/>
    </location>
</feature>
<feature type="disulfide bond" evidence="3">
    <location>
        <begin position="819"/>
        <end position="834"/>
    </location>
</feature>
<feature type="disulfide bond" evidence="3">
    <location>
        <begin position="836"/>
        <end position="845"/>
    </location>
</feature>
<feature type="disulfide bond" evidence="4">
    <location>
        <begin position="1010"/>
        <end position="1051"/>
    </location>
</feature>
<feature type="disulfide bond" evidence="3">
    <location>
        <begin position="1057"/>
        <end position="1068"/>
    </location>
</feature>
<feature type="disulfide bond" evidence="3">
    <location>
        <begin position="1062"/>
        <end position="1077"/>
    </location>
</feature>
<feature type="disulfide bond" evidence="3">
    <location>
        <begin position="1079"/>
        <end position="1088"/>
    </location>
</feature>
<feature type="disulfide bond" evidence="3">
    <location>
        <begin position="1095"/>
        <end position="1105"/>
    </location>
</feature>
<feature type="disulfide bond" evidence="3">
    <location>
        <begin position="1100"/>
        <end position="1115"/>
    </location>
</feature>
<feature type="disulfide bond" evidence="3">
    <location>
        <begin position="1117"/>
        <end position="1126"/>
    </location>
</feature>
<feature type="disulfide bond" evidence="3">
    <location>
        <begin position="1135"/>
        <end position="1147"/>
    </location>
</feature>
<feature type="disulfide bond" evidence="3">
    <location>
        <begin position="1141"/>
        <end position="1156"/>
    </location>
</feature>
<feature type="disulfide bond" evidence="3">
    <location>
        <begin position="1158"/>
        <end position="1167"/>
    </location>
</feature>
<feature type="disulfide bond" evidence="3">
    <location>
        <begin position="1174"/>
        <end position="1185"/>
    </location>
</feature>
<feature type="disulfide bond" evidence="3">
    <location>
        <begin position="1179"/>
        <end position="1194"/>
    </location>
</feature>
<feature type="disulfide bond" evidence="3">
    <location>
        <begin position="1196"/>
        <end position="1205"/>
    </location>
</feature>
<feature type="sequence conflict" description="In Ref. 2; AAH62128." evidence="13" ref="2">
    <original>G</original>
    <variation>E</variation>
    <location>
        <position position="842"/>
    </location>
</feature>
<proteinExistence type="evidence at protein level"/>
<accession>Q80YA8</accession>
<accession>A2ALU1</accession>
<accession>Q6P6N1</accession>
<name>CRUM2_MOUSE</name>